<gene>
    <name type="primary">nifJ</name>
</gene>
<accession>P0C181</accession>
<accession>Q53349</accession>
<proteinExistence type="inferred from homology"/>
<sequence>VVYQINEVIAIYPITPSSPMAEWADAWASEGKPNIWGTVPTVVQMQSEGGVAGAVHGALQTGSLTTTFTA</sequence>
<evidence type="ECO:0000305" key="1"/>
<keyword id="KW-0004">4Fe-4S</keyword>
<keyword id="KW-0249">Electron transport</keyword>
<keyword id="KW-0408">Iron</keyword>
<keyword id="KW-0411">Iron-sulfur</keyword>
<keyword id="KW-0479">Metal-binding</keyword>
<keyword id="KW-0535">Nitrogen fixation</keyword>
<keyword id="KW-0560">Oxidoreductase</keyword>
<keyword id="KW-0677">Repeat</keyword>
<keyword id="KW-0813">Transport</keyword>
<feature type="chain" id="PRO_0000228718" description="Pyruvate-flavodoxin oxidoreductase">
    <location>
        <begin position="1" status="less than"/>
        <end position="70" status="greater than"/>
    </location>
</feature>
<feature type="non-terminal residue">
    <location>
        <position position="1"/>
    </location>
</feature>
<feature type="non-terminal residue">
    <location>
        <position position="70"/>
    </location>
</feature>
<comment type="function">
    <text>Oxidoreductase required for the transfer of electrons from pyruvate to flavodoxin, which reduces nitrogenase.</text>
</comment>
<comment type="catalytic activity">
    <reaction>
        <text>oxidized [flavodoxin] + pyruvate + CoA + 2 H(+) = reduced [flavodoxin] + acetyl-CoA + CO2</text>
        <dbReference type="Rhea" id="RHEA:44140"/>
        <dbReference type="Rhea" id="RHEA-COMP:10622"/>
        <dbReference type="Rhea" id="RHEA-COMP:10623"/>
        <dbReference type="ChEBI" id="CHEBI:15361"/>
        <dbReference type="ChEBI" id="CHEBI:15378"/>
        <dbReference type="ChEBI" id="CHEBI:16526"/>
        <dbReference type="ChEBI" id="CHEBI:57287"/>
        <dbReference type="ChEBI" id="CHEBI:57288"/>
        <dbReference type="ChEBI" id="CHEBI:57618"/>
        <dbReference type="ChEBI" id="CHEBI:58210"/>
    </reaction>
</comment>
<comment type="similarity">
    <text evidence="1">Belongs to the pyruvate:ferredoxin/flavodoxin oxidoreductase family.</text>
</comment>
<protein>
    <recommendedName>
        <fullName>Pyruvate-flavodoxin oxidoreductase</fullName>
        <ecNumber>1.2.7.-</ecNumber>
    </recommendedName>
</protein>
<reference key="1">
    <citation type="journal article" date="1993" name="Arch. Microbiol.">
        <title>Identification of the nifJ gene coding for pyruvate:ferredoxin oxidoreductase in dinitrogen-fixing cyanobacteria.</title>
        <authorList>
            <person name="Schmitz O."/>
            <person name="Kentemich T."/>
            <person name="Zimmer W."/>
            <person name="Hundeshagen B."/>
            <person name="Bothe H."/>
        </authorList>
    </citation>
    <scope>NUCLEOTIDE SEQUENCE [GENOMIC DNA]</scope>
    <source>
        <strain>PCC 7119 / ATCC 29151</strain>
    </source>
</reference>
<organism>
    <name type="scientific">Anabaena variabilis</name>
    <dbReference type="NCBI Taxonomy" id="264691"/>
    <lineage>
        <taxon>Bacteria</taxon>
        <taxon>Bacillati</taxon>
        <taxon>Cyanobacteriota</taxon>
        <taxon>Cyanophyceae</taxon>
        <taxon>Nostocales</taxon>
        <taxon>Nostocaceae</taxon>
        <taxon>Trichormus</taxon>
    </lineage>
</organism>
<name>NIFJ_ANAVA</name>
<dbReference type="EC" id="1.2.7.-"/>
<dbReference type="SMR" id="P0C181"/>
<dbReference type="GO" id="GO:0051539">
    <property type="term" value="F:4 iron, 4 sulfur cluster binding"/>
    <property type="evidence" value="ECO:0007669"/>
    <property type="project" value="UniProtKB-KW"/>
</dbReference>
<dbReference type="GO" id="GO:0046872">
    <property type="term" value="F:metal ion binding"/>
    <property type="evidence" value="ECO:0007669"/>
    <property type="project" value="UniProtKB-KW"/>
</dbReference>
<dbReference type="GO" id="GO:0043873">
    <property type="term" value="F:pyruvate-flavodoxin oxidoreductase activity"/>
    <property type="evidence" value="ECO:0007669"/>
    <property type="project" value="RHEA"/>
</dbReference>
<dbReference type="GO" id="GO:0009399">
    <property type="term" value="P:nitrogen fixation"/>
    <property type="evidence" value="ECO:0007669"/>
    <property type="project" value="UniProtKB-KW"/>
</dbReference>
<dbReference type="GO" id="GO:0006979">
    <property type="term" value="P:response to oxidative stress"/>
    <property type="evidence" value="ECO:0007669"/>
    <property type="project" value="TreeGrafter"/>
</dbReference>
<dbReference type="Gene3D" id="3.40.50.970">
    <property type="match status" value="1"/>
</dbReference>
<dbReference type="InterPro" id="IPR050722">
    <property type="entry name" value="Pyruvate:ferred/Flavod_OxRd"/>
</dbReference>
<dbReference type="InterPro" id="IPR002880">
    <property type="entry name" value="Pyrv_Fd/Flavodoxin_OxRdtase_N"/>
</dbReference>
<dbReference type="InterPro" id="IPR029061">
    <property type="entry name" value="THDP-binding"/>
</dbReference>
<dbReference type="PANTHER" id="PTHR32154">
    <property type="entry name" value="PYRUVATE-FLAVODOXIN OXIDOREDUCTASE-RELATED"/>
    <property type="match status" value="1"/>
</dbReference>
<dbReference type="PANTHER" id="PTHR32154:SF0">
    <property type="entry name" value="PYRUVATE-FLAVODOXIN OXIDOREDUCTASE-RELATED"/>
    <property type="match status" value="1"/>
</dbReference>
<dbReference type="Pfam" id="PF01855">
    <property type="entry name" value="POR_N"/>
    <property type="match status" value="1"/>
</dbReference>
<dbReference type="SUPFAM" id="SSF52518">
    <property type="entry name" value="Thiamin diphosphate-binding fold (THDP-binding)"/>
    <property type="match status" value="1"/>
</dbReference>